<protein>
    <recommendedName>
        <fullName>Replication factor C subunit 5</fullName>
        <shortName>Replication factor C5</shortName>
    </recommendedName>
    <alternativeName>
        <fullName>Activator 1 40 kDa subunit</fullName>
    </alternativeName>
</protein>
<proteinExistence type="evidence at protein level"/>
<evidence type="ECO:0000269" key="1">
    <source>
    </source>
</evidence>
<evidence type="ECO:0000269" key="2">
    <source>
    </source>
</evidence>
<evidence type="ECO:0000269" key="3">
    <source>
    </source>
</evidence>
<evidence type="ECO:0000269" key="4">
    <source>
    </source>
</evidence>
<evidence type="ECO:0000269" key="5">
    <source>
    </source>
</evidence>
<evidence type="ECO:0000269" key="6">
    <source>
    </source>
</evidence>
<evidence type="ECO:0000269" key="7">
    <source>
    </source>
</evidence>
<evidence type="ECO:0000269" key="8">
    <source>
    </source>
</evidence>
<evidence type="ECO:0000269" key="9">
    <source>
    </source>
</evidence>
<evidence type="ECO:0000269" key="10">
    <source>
    </source>
</evidence>
<evidence type="ECO:0000305" key="11"/>
<evidence type="ECO:0007829" key="12">
    <source>
        <dbReference type="PDB" id="7STB"/>
    </source>
</evidence>
<evidence type="ECO:0007829" key="13">
    <source>
        <dbReference type="PDB" id="8DQW"/>
    </source>
</evidence>
<evidence type="ECO:0007829" key="14">
    <source>
        <dbReference type="PDB" id="8DR7"/>
    </source>
</evidence>
<evidence type="ECO:0007829" key="15">
    <source>
        <dbReference type="PDB" id="8FS7"/>
    </source>
</evidence>
<sequence length="354" mass="39942">MSLWVDKYRPKSLNALSHNEELTNFLKSLSDQPRDLPHLLLYGPNGTGKKTRCMALLESIFGPGVYRLKIDVRQFVTASNRKLELNVVSSPYHLEITPSDMGNNDRIVIQELLKEVAQMEQVDFQDSKDGLAHRYKCVIINEANSLTKDAQAALRRTMEKYSKNIRLIMVCDSMSPIIAPIKSRCLLIRCPAPSDSEISTILSDVVTNERIQLETKDILKRIAQASNGNLRVSLLMLESMALNNELALKSSSPIIKPDWIIVIHKLTRKIVKERSVNSLIECRAVLYDLLAHCIPANIILKELTFSLLDVETLNTTNKSSIIEYSSVFDERLSLGNKAIFHLEGFIAKVMCCLD</sequence>
<name>RFC5_YEAST</name>
<reference key="1">
    <citation type="journal article" date="1995" name="Mol. Cell. Biol.">
        <title>Characterization of the five replication factor C genes of Saccharomyces cerevisiae.</title>
        <authorList>
            <person name="Cullmann G."/>
            <person name="Fien K."/>
            <person name="Kobayashi R."/>
            <person name="Stillman B."/>
        </authorList>
    </citation>
    <scope>NUCLEOTIDE SEQUENCE [GENOMIC DNA]</scope>
    <scope>IDENTIFICATION IN THE RFC COMPLEX</scope>
    <source>
        <strain>ATCC 204508 / S288c</strain>
    </source>
</reference>
<reference key="2">
    <citation type="journal article" date="1994" name="Yeast">
        <title>Analysis of a 70 kb region on the right arm of yeast chromosome II.</title>
        <authorList>
            <person name="Mannhaupt G."/>
            <person name="Stucka R."/>
            <person name="Ehnle S."/>
            <person name="Vetter I."/>
            <person name="Feldmann H."/>
        </authorList>
    </citation>
    <scope>NUCLEOTIDE SEQUENCE [GENOMIC DNA]</scope>
    <source>
        <strain>ATCC 204508 / S288c</strain>
    </source>
</reference>
<reference key="3">
    <citation type="journal article" date="1994" name="EMBO J.">
        <title>Complete DNA sequence of yeast chromosome II.</title>
        <authorList>
            <person name="Feldmann H."/>
            <person name="Aigle M."/>
            <person name="Aljinovic G."/>
            <person name="Andre B."/>
            <person name="Baclet M.C."/>
            <person name="Barthe C."/>
            <person name="Baur A."/>
            <person name="Becam A.-M."/>
            <person name="Biteau N."/>
            <person name="Boles E."/>
            <person name="Brandt T."/>
            <person name="Brendel M."/>
            <person name="Brueckner M."/>
            <person name="Bussereau F."/>
            <person name="Christiansen C."/>
            <person name="Contreras R."/>
            <person name="Crouzet M."/>
            <person name="Cziepluch C."/>
            <person name="Demolis N."/>
            <person name="Delaveau T."/>
            <person name="Doignon F."/>
            <person name="Domdey H."/>
            <person name="Duesterhus S."/>
            <person name="Dubois E."/>
            <person name="Dujon B."/>
            <person name="El Bakkoury M."/>
            <person name="Entian K.-D."/>
            <person name="Feuermann M."/>
            <person name="Fiers W."/>
            <person name="Fobo G.M."/>
            <person name="Fritz C."/>
            <person name="Gassenhuber J."/>
            <person name="Glansdorff N."/>
            <person name="Goffeau A."/>
            <person name="Grivell L.A."/>
            <person name="de Haan M."/>
            <person name="Hein C."/>
            <person name="Herbert C.J."/>
            <person name="Hollenberg C.P."/>
            <person name="Holmstroem K."/>
            <person name="Jacq C."/>
            <person name="Jacquet M."/>
            <person name="Jauniaux J.-C."/>
            <person name="Jonniaux J.-L."/>
            <person name="Kallesoee T."/>
            <person name="Kiesau P."/>
            <person name="Kirchrath L."/>
            <person name="Koetter P."/>
            <person name="Korol S."/>
            <person name="Liebl S."/>
            <person name="Logghe M."/>
            <person name="Lohan A.J.E."/>
            <person name="Louis E.J."/>
            <person name="Li Z.Y."/>
            <person name="Maat M.J."/>
            <person name="Mallet L."/>
            <person name="Mannhaupt G."/>
            <person name="Messenguy F."/>
            <person name="Miosga T."/>
            <person name="Molemans F."/>
            <person name="Mueller S."/>
            <person name="Nasr F."/>
            <person name="Obermaier B."/>
            <person name="Perea J."/>
            <person name="Pierard A."/>
            <person name="Piravandi E."/>
            <person name="Pohl F.M."/>
            <person name="Pohl T.M."/>
            <person name="Potier S."/>
            <person name="Proft M."/>
            <person name="Purnelle B."/>
            <person name="Ramezani Rad M."/>
            <person name="Rieger M."/>
            <person name="Rose M."/>
            <person name="Schaaff-Gerstenschlaeger I."/>
            <person name="Scherens B."/>
            <person name="Schwarzlose C."/>
            <person name="Skala J."/>
            <person name="Slonimski P.P."/>
            <person name="Smits P.H.M."/>
            <person name="Souciet J.-L."/>
            <person name="Steensma H.Y."/>
            <person name="Stucka R."/>
            <person name="Urrestarazu L.A."/>
            <person name="van der Aart Q.J.M."/>
            <person name="Van Dyck L."/>
            <person name="Vassarotti A."/>
            <person name="Vetter I."/>
            <person name="Vierendeels F."/>
            <person name="Vissers S."/>
            <person name="Wagner G."/>
            <person name="de Wergifosse P."/>
            <person name="Wolfe K.H."/>
            <person name="Zagulski M."/>
            <person name="Zimmermann F.K."/>
            <person name="Mewes H.-W."/>
            <person name="Kleine K."/>
        </authorList>
    </citation>
    <scope>NUCLEOTIDE SEQUENCE [LARGE SCALE GENOMIC DNA]</scope>
    <source>
        <strain>ATCC 204508 / S288c</strain>
    </source>
</reference>
<reference key="4">
    <citation type="journal article" date="2014" name="G3 (Bethesda)">
        <title>The reference genome sequence of Saccharomyces cerevisiae: Then and now.</title>
        <authorList>
            <person name="Engel S.R."/>
            <person name="Dietrich F.S."/>
            <person name="Fisk D.G."/>
            <person name="Binkley G."/>
            <person name="Balakrishnan R."/>
            <person name="Costanzo M.C."/>
            <person name="Dwight S.S."/>
            <person name="Hitz B.C."/>
            <person name="Karra K."/>
            <person name="Nash R.S."/>
            <person name="Weng S."/>
            <person name="Wong E.D."/>
            <person name="Lloyd P."/>
            <person name="Skrzypek M.S."/>
            <person name="Miyasato S.R."/>
            <person name="Simison M."/>
            <person name="Cherry J.M."/>
        </authorList>
    </citation>
    <scope>GENOME REANNOTATION</scope>
    <source>
        <strain>ATCC 204508 / S288c</strain>
    </source>
</reference>
<reference key="5">
    <citation type="journal article" date="2007" name="Genome Res.">
        <title>Approaching a complete repository of sequence-verified protein-encoding clones for Saccharomyces cerevisiae.</title>
        <authorList>
            <person name="Hu Y."/>
            <person name="Rolfs A."/>
            <person name="Bhullar B."/>
            <person name="Murthy T.V.S."/>
            <person name="Zhu C."/>
            <person name="Berger M.F."/>
            <person name="Camargo A.A."/>
            <person name="Kelley F."/>
            <person name="McCarron S."/>
            <person name="Jepson D."/>
            <person name="Richardson A."/>
            <person name="Raphael J."/>
            <person name="Moreira D."/>
            <person name="Taycher E."/>
            <person name="Zuo D."/>
            <person name="Mohr S."/>
            <person name="Kane M.F."/>
            <person name="Williamson J."/>
            <person name="Simpson A.J.G."/>
            <person name="Bulyk M.L."/>
            <person name="Harlow E."/>
            <person name="Marsischky G."/>
            <person name="Kolodner R.D."/>
            <person name="LaBaer J."/>
        </authorList>
    </citation>
    <scope>NUCLEOTIDE SEQUENCE [GENOMIC DNA]</scope>
    <source>
        <strain>ATCC 204508 / S288c</strain>
    </source>
</reference>
<reference key="6">
    <citation type="journal article" date="1995" name="Nucleic Acids Res.">
        <title>Identification of the fifth subunit of Saccharomyces cerevisiae replication factor C.</title>
        <authorList>
            <person name="Gary S.L."/>
            <person name="Burgers P.M.J."/>
        </authorList>
    </citation>
    <scope>CHARACTERIZATION</scope>
</reference>
<reference key="7">
    <citation type="journal article" date="2000" name="Mol. Cell. Biol.">
        <title>Rfc5, in cooperation with rad24, controls DNA damage checkpoints throughout the cell cycle in Saccharomyces cerevisiae.</title>
        <authorList>
            <person name="Naiki T."/>
            <person name="Shimomura T."/>
            <person name="Kondo T."/>
            <person name="Matsumoto K."/>
            <person name="Sugimoto K."/>
        </authorList>
    </citation>
    <scope>FUNCTION</scope>
    <scope>INTERACTION WITH RAD24</scope>
</reference>
<reference key="8">
    <citation type="journal article" date="2001" name="Mol. Cell">
        <title>Identification of RFC(Ctf18p, Ctf8p, Dcc1p): an alternative RFC complex required for sister chromatid cohesion in S. cerevisiae.</title>
        <authorList>
            <person name="Mayer M.L."/>
            <person name="Gygi S.P."/>
            <person name="Aebersold R."/>
            <person name="Hieter P."/>
        </authorList>
    </citation>
    <scope>IDENTIFICATION IN THE CTF18-RFC COMPLEX</scope>
</reference>
<reference key="9">
    <citation type="journal article" date="2001" name="Mol. Cell. Biol.">
        <title>Chl12 (Ctf18) forms a novel replication factor C-related complex and functions redundantly with Rad24 in the DNA replication checkpoint pathway.</title>
        <authorList>
            <person name="Naiki T."/>
            <person name="Kondo T."/>
            <person name="Nakada D."/>
            <person name="Matsumoto K."/>
            <person name="Sugimoto K."/>
        </authorList>
    </citation>
    <scope>FUNCTION</scope>
    <scope>INTERACTION WITH CTF18</scope>
</reference>
<reference key="10">
    <citation type="journal article" date="2003" name="EMBO J.">
        <title>Elg1 forms an alternative RFC complex important for DNA replication and genome integrity.</title>
        <authorList>
            <person name="Bellaoui M."/>
            <person name="Chang M."/>
            <person name="Ou J."/>
            <person name="Xu H."/>
            <person name="Boone C."/>
            <person name="Brown G.W."/>
        </authorList>
    </citation>
    <scope>INTERACTION WITH ELG1</scope>
</reference>
<reference key="11">
    <citation type="journal article" date="2003" name="Mol. Cell. Biol.">
        <title>Mechanical link between cohesion establishment and DNA replication: Ctf7p/Eco1p, a cohesion establishment factor, associates with three different replication factor C complexes.</title>
        <authorList>
            <person name="Kenna M.A."/>
            <person name="Skibbens R.V."/>
        </authorList>
    </citation>
    <scope>FUNCTION</scope>
    <scope>INTERACTION WITH ECO1</scope>
</reference>
<reference key="12">
    <citation type="journal article" date="2003" name="Nature">
        <title>Global analysis of protein expression in yeast.</title>
        <authorList>
            <person name="Ghaemmaghami S."/>
            <person name="Huh W.-K."/>
            <person name="Bower K."/>
            <person name="Howson R.W."/>
            <person name="Belle A."/>
            <person name="Dephoure N."/>
            <person name="O'Shea E.K."/>
            <person name="Weissman J.S."/>
        </authorList>
    </citation>
    <scope>LEVEL OF PROTEIN EXPRESSION [LARGE SCALE ANALYSIS]</scope>
</reference>
<reference key="13">
    <citation type="journal article" date="2003" name="Proc. Natl. Acad. Sci. U.S.A.">
        <title>Yeast Rad17/Mec3/Ddc1: a sliding clamp for the DNA damage checkpoint.</title>
        <authorList>
            <person name="Majka J."/>
            <person name="Burgers P.M.J."/>
        </authorList>
    </citation>
    <scope>IDENTIFICATION IN THE RAD24-RFC COMPLEX</scope>
    <scope>FUNCTION OF THE RAD24-RFC COMPLEX</scope>
</reference>
<reference key="14">
    <citation type="journal article" date="2005" name="Mol. Cell. Biol.">
        <title>Replication protein A-directed unloading of PCNA by the Ctf18 cohesion establishment complex.</title>
        <authorList>
            <person name="Bylund G.O."/>
            <person name="Burgers P.M."/>
        </authorList>
    </citation>
    <scope>IDENTIFICATION IN THE RFC COMPLEX</scope>
    <scope>IDENTIFICATION IN THE RAD24-RFC COMPLEX</scope>
    <scope>IDENTIFICATION IN THE ELG1-RFC COMPLEX</scope>
    <scope>IDENTIFICATION IN THE CTF18-RFC COMPLEX</scope>
    <scope>FUNCTION OF THE CTF18-RFC COMPLEX</scope>
</reference>
<reference key="15">
    <citation type="journal article" date="2004" name="Nature">
        <title>Structural analysis of a eukaryotic sliding DNA clamp-clamp loader complex.</title>
        <authorList>
            <person name="Bowman G.D."/>
            <person name="O'Donnell M."/>
            <person name="Kuriyan J."/>
        </authorList>
    </citation>
    <scope>X-RAY CRYSTALLOGRAPHY (2.85 ANGSTROMS) IN COMPLEX WITH AN ATP ANALOG; RCF1; RCF2; RCF3; RCF4 AND PCNA</scope>
</reference>
<organism>
    <name type="scientific">Saccharomyces cerevisiae (strain ATCC 204508 / S288c)</name>
    <name type="common">Baker's yeast</name>
    <dbReference type="NCBI Taxonomy" id="559292"/>
    <lineage>
        <taxon>Eukaryota</taxon>
        <taxon>Fungi</taxon>
        <taxon>Dikarya</taxon>
        <taxon>Ascomycota</taxon>
        <taxon>Saccharomycotina</taxon>
        <taxon>Saccharomycetes</taxon>
        <taxon>Saccharomycetales</taxon>
        <taxon>Saccharomycetaceae</taxon>
        <taxon>Saccharomyces</taxon>
    </lineage>
</organism>
<feature type="chain" id="PRO_0000121765" description="Replication factor C subunit 5">
    <location>
        <begin position="1"/>
        <end position="354"/>
    </location>
</feature>
<feature type="binding site">
    <location>
        <position position="5"/>
    </location>
    <ligand>
        <name>ATP</name>
        <dbReference type="ChEBI" id="CHEBI:30616"/>
    </ligand>
</feature>
<feature type="binding site">
    <location>
        <position position="17"/>
    </location>
    <ligand>
        <name>ATP</name>
        <dbReference type="ChEBI" id="CHEBI:30616"/>
    </ligand>
</feature>
<feature type="binding site">
    <location>
        <begin position="43"/>
        <end position="51"/>
    </location>
    <ligand>
        <name>ATP</name>
        <dbReference type="ChEBI" id="CHEBI:30616"/>
    </ligand>
</feature>
<feature type="binding site">
    <location>
        <position position="231"/>
    </location>
    <ligand>
        <name>ATP</name>
        <dbReference type="ChEBI" id="CHEBI:30616"/>
    </ligand>
</feature>
<feature type="helix" evidence="13">
    <location>
        <begin position="4"/>
        <end position="7"/>
    </location>
</feature>
<feature type="helix" evidence="13">
    <location>
        <begin position="13"/>
        <end position="15"/>
    </location>
</feature>
<feature type="helix" evidence="13">
    <location>
        <begin position="20"/>
        <end position="31"/>
    </location>
</feature>
<feature type="helix" evidence="13">
    <location>
        <begin position="33"/>
        <end position="35"/>
    </location>
</feature>
<feature type="strand" evidence="13">
    <location>
        <begin position="39"/>
        <end position="42"/>
    </location>
</feature>
<feature type="helix" evidence="13">
    <location>
        <begin position="49"/>
        <end position="60"/>
    </location>
</feature>
<feature type="helix" evidence="13">
    <location>
        <begin position="63"/>
        <end position="66"/>
    </location>
</feature>
<feature type="strand" evidence="13">
    <location>
        <begin position="69"/>
        <end position="76"/>
    </location>
</feature>
<feature type="strand" evidence="15">
    <location>
        <begin position="78"/>
        <end position="80"/>
    </location>
</feature>
<feature type="strand" evidence="13">
    <location>
        <begin position="82"/>
        <end position="90"/>
    </location>
</feature>
<feature type="strand" evidence="13">
    <location>
        <begin position="93"/>
        <end position="96"/>
    </location>
</feature>
<feature type="helix" evidence="13">
    <location>
        <begin position="98"/>
        <end position="104"/>
    </location>
</feature>
<feature type="helix" evidence="13">
    <location>
        <begin position="105"/>
        <end position="118"/>
    </location>
</feature>
<feature type="strand" evidence="13">
    <location>
        <begin position="122"/>
        <end position="124"/>
    </location>
</feature>
<feature type="strand" evidence="13">
    <location>
        <begin position="126"/>
        <end position="133"/>
    </location>
</feature>
<feature type="strand" evidence="13">
    <location>
        <begin position="136"/>
        <end position="140"/>
    </location>
</feature>
<feature type="helix" evidence="13">
    <location>
        <begin position="143"/>
        <end position="145"/>
    </location>
</feature>
<feature type="helix" evidence="13">
    <location>
        <begin position="148"/>
        <end position="160"/>
    </location>
</feature>
<feature type="turn" evidence="13">
    <location>
        <begin position="161"/>
        <end position="164"/>
    </location>
</feature>
<feature type="strand" evidence="13">
    <location>
        <begin position="165"/>
        <end position="172"/>
    </location>
</feature>
<feature type="strand" evidence="14">
    <location>
        <begin position="174"/>
        <end position="177"/>
    </location>
</feature>
<feature type="helix" evidence="13">
    <location>
        <begin position="179"/>
        <end position="183"/>
    </location>
</feature>
<feature type="strand" evidence="13">
    <location>
        <begin position="185"/>
        <end position="189"/>
    </location>
</feature>
<feature type="helix" evidence="13">
    <location>
        <begin position="195"/>
        <end position="209"/>
    </location>
</feature>
<feature type="strand" evidence="13">
    <location>
        <begin position="212"/>
        <end position="214"/>
    </location>
</feature>
<feature type="helix" evidence="13">
    <location>
        <begin position="217"/>
        <end position="226"/>
    </location>
</feature>
<feature type="helix" evidence="13">
    <location>
        <begin position="230"/>
        <end position="243"/>
    </location>
</feature>
<feature type="turn" evidence="13">
    <location>
        <begin position="244"/>
        <end position="246"/>
    </location>
</feature>
<feature type="helix" evidence="13">
    <location>
        <begin position="258"/>
        <end position="272"/>
    </location>
</feature>
<feature type="helix" evidence="13">
    <location>
        <begin position="276"/>
        <end position="291"/>
    </location>
</feature>
<feature type="helix" evidence="13">
    <location>
        <begin position="296"/>
        <end position="308"/>
    </location>
</feature>
<feature type="strand" evidence="12">
    <location>
        <begin position="311"/>
        <end position="313"/>
    </location>
</feature>
<feature type="helix" evidence="13">
    <location>
        <begin position="315"/>
        <end position="334"/>
    </location>
</feature>
<feature type="helix" evidence="13">
    <location>
        <begin position="338"/>
        <end position="353"/>
    </location>
</feature>
<dbReference type="EMBL" id="U26031">
    <property type="protein sequence ID" value="AAC49065.1"/>
    <property type="molecule type" value="Genomic_DNA"/>
</dbReference>
<dbReference type="EMBL" id="X78993">
    <property type="protein sequence ID" value="CAA55595.1"/>
    <property type="molecule type" value="Genomic_DNA"/>
</dbReference>
<dbReference type="EMBL" id="Z35956">
    <property type="protein sequence ID" value="CAA85036.1"/>
    <property type="molecule type" value="Genomic_DNA"/>
</dbReference>
<dbReference type="EMBL" id="AY693173">
    <property type="protein sequence ID" value="AAT93192.1"/>
    <property type="molecule type" value="Genomic_DNA"/>
</dbReference>
<dbReference type="EMBL" id="BK006936">
    <property type="protein sequence ID" value="DAA07208.1"/>
    <property type="molecule type" value="Genomic_DNA"/>
</dbReference>
<dbReference type="PIR" id="S48257">
    <property type="entry name" value="S48257"/>
</dbReference>
<dbReference type="RefSeq" id="NP_009644.3">
    <property type="nucleotide sequence ID" value="NM_001178435.3"/>
</dbReference>
<dbReference type="PDB" id="1SXJ">
    <property type="method" value="X-ray"/>
    <property type="resolution" value="2.85 A"/>
    <property type="chains" value="E=1-354"/>
</dbReference>
<dbReference type="PDB" id="7SGZ">
    <property type="method" value="EM"/>
    <property type="resolution" value="3.17 A"/>
    <property type="chains" value="E=1-354"/>
</dbReference>
<dbReference type="PDB" id="7SH2">
    <property type="method" value="EM"/>
    <property type="resolution" value="3.23 A"/>
    <property type="chains" value="E=1-354"/>
</dbReference>
<dbReference type="PDB" id="7ST9">
    <property type="method" value="EM"/>
    <property type="resolution" value="2.20 A"/>
    <property type="chains" value="E=1-354"/>
</dbReference>
<dbReference type="PDB" id="7STB">
    <property type="method" value="EM"/>
    <property type="resolution" value="2.72 A"/>
    <property type="chains" value="E=1-354"/>
</dbReference>
<dbReference type="PDB" id="7STE">
    <property type="method" value="EM"/>
    <property type="resolution" value="2.73 A"/>
    <property type="chains" value="E=1-354"/>
</dbReference>
<dbReference type="PDB" id="7TFH">
    <property type="method" value="EM"/>
    <property type="resolution" value="3.09 A"/>
    <property type="chains" value="E=1-354"/>
</dbReference>
<dbReference type="PDB" id="7TFI">
    <property type="method" value="EM"/>
    <property type="resolution" value="3.41 A"/>
    <property type="chains" value="E=1-354"/>
</dbReference>
<dbReference type="PDB" id="7TFJ">
    <property type="method" value="EM"/>
    <property type="resolution" value="3.30 A"/>
    <property type="chains" value="E=1-354"/>
</dbReference>
<dbReference type="PDB" id="7TFK">
    <property type="method" value="EM"/>
    <property type="resolution" value="3.25 A"/>
    <property type="chains" value="E=1-354"/>
</dbReference>
<dbReference type="PDB" id="7TFL">
    <property type="method" value="EM"/>
    <property type="resolution" value="3.33 A"/>
    <property type="chains" value="E=1-354"/>
</dbReference>
<dbReference type="PDB" id="7THJ">
    <property type="method" value="EM"/>
    <property type="resolution" value="3.80 A"/>
    <property type="chains" value="E=1-354"/>
</dbReference>
<dbReference type="PDB" id="7THV">
    <property type="method" value="EM"/>
    <property type="resolution" value="4.00 A"/>
    <property type="chains" value="E=1-354"/>
</dbReference>
<dbReference type="PDB" id="7TI8">
    <property type="method" value="EM"/>
    <property type="resolution" value="3.50 A"/>
    <property type="chains" value="E=1-354"/>
</dbReference>
<dbReference type="PDB" id="7TIB">
    <property type="method" value="EM"/>
    <property type="resolution" value="3.40 A"/>
    <property type="chains" value="E=1-354"/>
</dbReference>
<dbReference type="PDB" id="7TIC">
    <property type="method" value="EM"/>
    <property type="resolution" value="3.90 A"/>
    <property type="chains" value="E=1-354"/>
</dbReference>
<dbReference type="PDB" id="7TID">
    <property type="method" value="EM"/>
    <property type="resolution" value="3.30 A"/>
    <property type="chains" value="E=1-354"/>
</dbReference>
<dbReference type="PDB" id="7TKU">
    <property type="method" value="EM"/>
    <property type="resolution" value="4.00 A"/>
    <property type="chains" value="E=1-354"/>
</dbReference>
<dbReference type="PDB" id="7U19">
    <property type="method" value="EM"/>
    <property type="resolution" value="3.70 A"/>
    <property type="chains" value="E=1-354"/>
</dbReference>
<dbReference type="PDB" id="7U1A">
    <property type="method" value="EM"/>
    <property type="resolution" value="3.30 A"/>
    <property type="chains" value="E=1-354"/>
</dbReference>
<dbReference type="PDB" id="7U1P">
    <property type="method" value="EM"/>
    <property type="resolution" value="3.00 A"/>
    <property type="chains" value="E=1-354"/>
</dbReference>
<dbReference type="PDB" id="8DQW">
    <property type="method" value="EM"/>
    <property type="resolution" value="2.10 A"/>
    <property type="chains" value="E=1-354"/>
</dbReference>
<dbReference type="PDB" id="8DQX">
    <property type="method" value="EM"/>
    <property type="resolution" value="2.10 A"/>
    <property type="chains" value="E=1-354"/>
</dbReference>
<dbReference type="PDB" id="8DQZ">
    <property type="method" value="EM"/>
    <property type="resolution" value="2.92 A"/>
    <property type="chains" value="E=1-354"/>
</dbReference>
<dbReference type="PDB" id="8DR0">
    <property type="method" value="EM"/>
    <property type="resolution" value="2.42 A"/>
    <property type="chains" value="E=1-354"/>
</dbReference>
<dbReference type="PDB" id="8DR1">
    <property type="method" value="EM"/>
    <property type="resolution" value="2.14 A"/>
    <property type="chains" value="E=1-354"/>
</dbReference>
<dbReference type="PDB" id="8DR3">
    <property type="method" value="EM"/>
    <property type="resolution" value="2.20 A"/>
    <property type="chains" value="E=1-354"/>
</dbReference>
<dbReference type="PDB" id="8DR4">
    <property type="method" value="EM"/>
    <property type="resolution" value="2.45 A"/>
    <property type="chains" value="E=1-354"/>
</dbReference>
<dbReference type="PDB" id="8DR5">
    <property type="method" value="EM"/>
    <property type="resolution" value="2.76 A"/>
    <property type="chains" value="E=1-354"/>
</dbReference>
<dbReference type="PDB" id="8DR6">
    <property type="method" value="EM"/>
    <property type="resolution" value="2.39 A"/>
    <property type="chains" value="E=1-354"/>
</dbReference>
<dbReference type="PDB" id="8DR7">
    <property type="method" value="EM"/>
    <property type="resolution" value="2.70 A"/>
    <property type="chains" value="E=1-354"/>
</dbReference>
<dbReference type="PDB" id="8FS3">
    <property type="method" value="EM"/>
    <property type="resolution" value="2.93 A"/>
    <property type="chains" value="E=1-354"/>
</dbReference>
<dbReference type="PDB" id="8FS4">
    <property type="method" value="EM"/>
    <property type="resolution" value="2.94 A"/>
    <property type="chains" value="E=1-354"/>
</dbReference>
<dbReference type="PDB" id="8FS5">
    <property type="method" value="EM"/>
    <property type="resolution" value="2.76 A"/>
    <property type="chains" value="E=1-354"/>
</dbReference>
<dbReference type="PDB" id="8FS6">
    <property type="method" value="EM"/>
    <property type="resolution" value="2.90 A"/>
    <property type="chains" value="E=1-354"/>
</dbReference>
<dbReference type="PDB" id="8FS7">
    <property type="method" value="EM"/>
    <property type="resolution" value="2.85 A"/>
    <property type="chains" value="E=1-354"/>
</dbReference>
<dbReference type="PDB" id="8FS8">
    <property type="method" value="EM"/>
    <property type="resolution" value="3.04 A"/>
    <property type="chains" value="E=1-354"/>
</dbReference>
<dbReference type="PDB" id="8THB">
    <property type="method" value="EM"/>
    <property type="resolution" value="3.20 A"/>
    <property type="chains" value="E=1-354"/>
</dbReference>
<dbReference type="PDB" id="8THC">
    <property type="method" value="EM"/>
    <property type="resolution" value="3.67 A"/>
    <property type="chains" value="E=1-354"/>
</dbReference>
<dbReference type="PDB" id="8THD">
    <property type="method" value="EM"/>
    <property type="resolution" value="3.25 A"/>
    <property type="chains" value="E=1-354"/>
</dbReference>
<dbReference type="PDB" id="8TW8">
    <property type="method" value="EM"/>
    <property type="resolution" value="3.50 A"/>
    <property type="chains" value="5=1-354"/>
</dbReference>
<dbReference type="PDBsum" id="1SXJ"/>
<dbReference type="PDBsum" id="7SGZ"/>
<dbReference type="PDBsum" id="7SH2"/>
<dbReference type="PDBsum" id="7ST9"/>
<dbReference type="PDBsum" id="7STB"/>
<dbReference type="PDBsum" id="7STE"/>
<dbReference type="PDBsum" id="7TFH"/>
<dbReference type="PDBsum" id="7TFI"/>
<dbReference type="PDBsum" id="7TFJ"/>
<dbReference type="PDBsum" id="7TFK"/>
<dbReference type="PDBsum" id="7TFL"/>
<dbReference type="PDBsum" id="7THJ"/>
<dbReference type="PDBsum" id="7THV"/>
<dbReference type="PDBsum" id="7TI8"/>
<dbReference type="PDBsum" id="7TIB"/>
<dbReference type="PDBsum" id="7TIC"/>
<dbReference type="PDBsum" id="7TID"/>
<dbReference type="PDBsum" id="7TKU"/>
<dbReference type="PDBsum" id="7U19"/>
<dbReference type="PDBsum" id="7U1A"/>
<dbReference type="PDBsum" id="7U1P"/>
<dbReference type="PDBsum" id="8DQW"/>
<dbReference type="PDBsum" id="8DQX"/>
<dbReference type="PDBsum" id="8DQZ"/>
<dbReference type="PDBsum" id="8DR0"/>
<dbReference type="PDBsum" id="8DR1"/>
<dbReference type="PDBsum" id="8DR3"/>
<dbReference type="PDBsum" id="8DR4"/>
<dbReference type="PDBsum" id="8DR5"/>
<dbReference type="PDBsum" id="8DR6"/>
<dbReference type="PDBsum" id="8DR7"/>
<dbReference type="PDBsum" id="8FS3"/>
<dbReference type="PDBsum" id="8FS4"/>
<dbReference type="PDBsum" id="8FS5"/>
<dbReference type="PDBsum" id="8FS6"/>
<dbReference type="PDBsum" id="8FS7"/>
<dbReference type="PDBsum" id="8FS8"/>
<dbReference type="PDBsum" id="8THB"/>
<dbReference type="PDBsum" id="8THC"/>
<dbReference type="PDBsum" id="8THD"/>
<dbReference type="PDBsum" id="8TW8"/>
<dbReference type="EMDB" id="EMD-25121"/>
<dbReference type="EMDB" id="EMD-25122"/>
<dbReference type="EMDB" id="EMD-25422"/>
<dbReference type="EMDB" id="EMD-25423"/>
<dbReference type="EMDB" id="EMD-25426"/>
<dbReference type="EMDB" id="EMD-25568"/>
<dbReference type="EMDB" id="EMD-25569"/>
<dbReference type="EMDB" id="EMD-25615"/>
<dbReference type="EMDB" id="EMD-25616"/>
<dbReference type="EMDB" id="EMD-25617"/>
<dbReference type="EMDB" id="EMD-25753"/>
<dbReference type="EMDB" id="EMD-25872"/>
<dbReference type="EMDB" id="EMD-25873"/>
<dbReference type="EMDB" id="EMD-25874"/>
<dbReference type="EMDB" id="EMD-25875"/>
<dbReference type="EMDB" id="EMD-25876"/>
<dbReference type="EMDB" id="EMD-26297"/>
<dbReference type="EMDB" id="EMD-26298"/>
<dbReference type="EMDB" id="EMD-26302"/>
<dbReference type="EMDB" id="EMD-27662"/>
<dbReference type="EMDB" id="EMD-27663"/>
<dbReference type="EMDB" id="EMD-27666"/>
<dbReference type="EMDB" id="EMD-27667"/>
<dbReference type="EMDB" id="EMD-27668"/>
<dbReference type="EMDB" id="EMD-27669"/>
<dbReference type="EMDB" id="EMD-27670"/>
<dbReference type="EMDB" id="EMD-27671"/>
<dbReference type="EMDB" id="EMD-27672"/>
<dbReference type="EMDB" id="EMD-27673"/>
<dbReference type="EMDB" id="EMD-29412"/>
<dbReference type="EMDB" id="EMD-29413"/>
<dbReference type="EMDB" id="EMD-29414"/>
<dbReference type="EMDB" id="EMD-29415"/>
<dbReference type="EMDB" id="EMD-29416"/>
<dbReference type="EMDB" id="EMD-29417"/>
<dbReference type="EMDB" id="EMD-41252"/>
<dbReference type="EMDB" id="EMD-41253"/>
<dbReference type="EMDB" id="EMD-41254"/>
<dbReference type="EMDB" id="EMD-41661"/>
<dbReference type="EMDB" id="EMD-41662"/>
<dbReference type="EMDB" id="EMD-41664"/>
<dbReference type="EMDB" id="EMD-41665"/>
<dbReference type="SMR" id="P38251"/>
<dbReference type="BioGRID" id="32793">
    <property type="interactions" value="327"/>
</dbReference>
<dbReference type="ComplexPortal" id="CPX-1731">
    <property type="entry name" value="CTF18-RFC complex"/>
</dbReference>
<dbReference type="ComplexPortal" id="CPX-1807">
    <property type="entry name" value="Rad17 RFC-like complex"/>
</dbReference>
<dbReference type="ComplexPortal" id="CPX-422">
    <property type="entry name" value="ELG1-RFC complex"/>
</dbReference>
<dbReference type="ComplexPortal" id="CPX-545">
    <property type="entry name" value="DNA replication factor C complex"/>
</dbReference>
<dbReference type="DIP" id="DIP-2531N"/>
<dbReference type="FunCoup" id="P38251">
    <property type="interactions" value="1027"/>
</dbReference>
<dbReference type="IntAct" id="P38251">
    <property type="interactions" value="20"/>
</dbReference>
<dbReference type="MINT" id="P38251"/>
<dbReference type="STRING" id="4932.YBR087W"/>
<dbReference type="iPTMnet" id="P38251"/>
<dbReference type="PaxDb" id="4932-YBR087W"/>
<dbReference type="PeptideAtlas" id="P38251"/>
<dbReference type="EnsemblFungi" id="YBR087W_mRNA">
    <property type="protein sequence ID" value="YBR087W"/>
    <property type="gene ID" value="YBR087W"/>
</dbReference>
<dbReference type="GeneID" id="852383"/>
<dbReference type="KEGG" id="sce:YBR087W"/>
<dbReference type="AGR" id="SGD:S000000291"/>
<dbReference type="SGD" id="S000000291">
    <property type="gene designation" value="RFC5"/>
</dbReference>
<dbReference type="VEuPathDB" id="FungiDB:YBR087W"/>
<dbReference type="eggNOG" id="KOG2035">
    <property type="taxonomic scope" value="Eukaryota"/>
</dbReference>
<dbReference type="GeneTree" id="ENSGT00550000075006"/>
<dbReference type="HOGENOM" id="CLU_042324_5_0_1"/>
<dbReference type="InParanoid" id="P38251"/>
<dbReference type="OMA" id="LKADIMH"/>
<dbReference type="OrthoDB" id="761538at2759"/>
<dbReference type="BioCyc" id="YEAST:G3O-29054-MONOMER"/>
<dbReference type="Reactome" id="R-SCE-110312">
    <property type="pathway name" value="Translesion synthesis by REV1"/>
</dbReference>
<dbReference type="Reactome" id="R-SCE-110320">
    <property type="pathway name" value="Translesion Synthesis by POLH"/>
</dbReference>
<dbReference type="Reactome" id="R-SCE-176187">
    <property type="pathway name" value="Activation of ATR in response to replication stress"/>
</dbReference>
<dbReference type="Reactome" id="R-SCE-5655862">
    <property type="pathway name" value="Translesion synthesis by POLK"/>
</dbReference>
<dbReference type="Reactome" id="R-SCE-5656121">
    <property type="pathway name" value="Translesion synthesis by POLI"/>
</dbReference>
<dbReference type="Reactome" id="R-SCE-5656169">
    <property type="pathway name" value="Termination of translesion DNA synthesis"/>
</dbReference>
<dbReference type="Reactome" id="R-SCE-5696397">
    <property type="pathway name" value="Gap-filling DNA repair synthesis and ligation in GG-NER"/>
</dbReference>
<dbReference type="Reactome" id="R-SCE-6782135">
    <property type="pathway name" value="Dual incision in TC-NER"/>
</dbReference>
<dbReference type="Reactome" id="R-SCE-6782210">
    <property type="pathway name" value="Gap-filling DNA repair synthesis and ligation in TC-NER"/>
</dbReference>
<dbReference type="Reactome" id="R-SCE-69091">
    <property type="pathway name" value="Polymerase switching"/>
</dbReference>
<dbReference type="BioGRID-ORCS" id="852383">
    <property type="hits" value="3 hits in 10 CRISPR screens"/>
</dbReference>
<dbReference type="EvolutionaryTrace" id="P38251"/>
<dbReference type="PRO" id="PR:P38251"/>
<dbReference type="Proteomes" id="UP000002311">
    <property type="component" value="Chromosome II"/>
</dbReference>
<dbReference type="RNAct" id="P38251">
    <property type="molecule type" value="protein"/>
</dbReference>
<dbReference type="GO" id="GO:0031390">
    <property type="term" value="C:Ctf18 RFC-like complex"/>
    <property type="evidence" value="ECO:0000353"/>
    <property type="project" value="ComplexPortal"/>
</dbReference>
<dbReference type="GO" id="GO:0005663">
    <property type="term" value="C:DNA replication factor C complex"/>
    <property type="evidence" value="ECO:0000314"/>
    <property type="project" value="SGD"/>
</dbReference>
<dbReference type="GO" id="GO:0031391">
    <property type="term" value="C:Elg1 RFC-like complex"/>
    <property type="evidence" value="ECO:0000353"/>
    <property type="project" value="SGD"/>
</dbReference>
<dbReference type="GO" id="GO:0005634">
    <property type="term" value="C:nucleus"/>
    <property type="evidence" value="ECO:0000353"/>
    <property type="project" value="ComplexPortal"/>
</dbReference>
<dbReference type="GO" id="GO:0031389">
    <property type="term" value="C:Rad17 RFC-like complex"/>
    <property type="evidence" value="ECO:0000314"/>
    <property type="project" value="SGD"/>
</dbReference>
<dbReference type="GO" id="GO:0005524">
    <property type="term" value="F:ATP binding"/>
    <property type="evidence" value="ECO:0007669"/>
    <property type="project" value="UniProtKB-KW"/>
</dbReference>
<dbReference type="GO" id="GO:0016887">
    <property type="term" value="F:ATP hydrolysis activity"/>
    <property type="evidence" value="ECO:0007669"/>
    <property type="project" value="InterPro"/>
</dbReference>
<dbReference type="GO" id="GO:0003677">
    <property type="term" value="F:DNA binding"/>
    <property type="evidence" value="ECO:0007669"/>
    <property type="project" value="UniProtKB-KW"/>
</dbReference>
<dbReference type="GO" id="GO:0000077">
    <property type="term" value="P:DNA damage checkpoint signaling"/>
    <property type="evidence" value="ECO:0000303"/>
    <property type="project" value="ComplexPortal"/>
</dbReference>
<dbReference type="GO" id="GO:0006281">
    <property type="term" value="P:DNA repair"/>
    <property type="evidence" value="ECO:0000318"/>
    <property type="project" value="GO_Central"/>
</dbReference>
<dbReference type="GO" id="GO:0006261">
    <property type="term" value="P:DNA-templated DNA replication"/>
    <property type="evidence" value="ECO:0000314"/>
    <property type="project" value="ComplexPortal"/>
</dbReference>
<dbReference type="GO" id="GO:0006272">
    <property type="term" value="P:leading strand elongation"/>
    <property type="evidence" value="ECO:0000314"/>
    <property type="project" value="SGD"/>
</dbReference>
<dbReference type="GO" id="GO:0007064">
    <property type="term" value="P:mitotic sister chromatid cohesion"/>
    <property type="evidence" value="ECO:0000303"/>
    <property type="project" value="ComplexPortal"/>
</dbReference>
<dbReference type="GO" id="GO:0007062">
    <property type="term" value="P:sister chromatid cohesion"/>
    <property type="evidence" value="ECO:0000315"/>
    <property type="project" value="SGD"/>
</dbReference>
<dbReference type="CDD" id="cd00009">
    <property type="entry name" value="AAA"/>
    <property type="match status" value="1"/>
</dbReference>
<dbReference type="FunFam" id="1.20.272.10:FF:000002">
    <property type="entry name" value="Replication factor C subunit 3"/>
    <property type="match status" value="1"/>
</dbReference>
<dbReference type="FunFam" id="3.40.50.300:FF:000136">
    <property type="entry name" value="Replication factor C subunit 5"/>
    <property type="match status" value="1"/>
</dbReference>
<dbReference type="Gene3D" id="1.10.8.60">
    <property type="match status" value="1"/>
</dbReference>
<dbReference type="Gene3D" id="1.20.272.10">
    <property type="match status" value="1"/>
</dbReference>
<dbReference type="Gene3D" id="3.40.50.300">
    <property type="entry name" value="P-loop containing nucleotide triphosphate hydrolases"/>
    <property type="match status" value="1"/>
</dbReference>
<dbReference type="InterPro" id="IPR003593">
    <property type="entry name" value="AAA+_ATPase"/>
</dbReference>
<dbReference type="InterPro" id="IPR008921">
    <property type="entry name" value="DNA_pol3_clamp-load_cplx_C"/>
</dbReference>
<dbReference type="InterPro" id="IPR050238">
    <property type="entry name" value="DNA_Rep/Repair_Clamp_Loader"/>
</dbReference>
<dbReference type="InterPro" id="IPR027417">
    <property type="entry name" value="P-loop_NTPase"/>
</dbReference>
<dbReference type="PANTHER" id="PTHR11669">
    <property type="entry name" value="REPLICATION FACTOR C / DNA POLYMERASE III GAMMA-TAU SUBUNIT"/>
    <property type="match status" value="1"/>
</dbReference>
<dbReference type="PANTHER" id="PTHR11669:SF1">
    <property type="entry name" value="REPLICATION FACTOR C SUBUNIT 3"/>
    <property type="match status" value="1"/>
</dbReference>
<dbReference type="Pfam" id="PF13177">
    <property type="entry name" value="DNA_pol3_delta2"/>
    <property type="match status" value="1"/>
</dbReference>
<dbReference type="Pfam" id="PF21960">
    <property type="entry name" value="RCF1-5-like_lid"/>
    <property type="match status" value="1"/>
</dbReference>
<dbReference type="Pfam" id="PF22534">
    <property type="entry name" value="RFC_C"/>
    <property type="match status" value="1"/>
</dbReference>
<dbReference type="SMART" id="SM00382">
    <property type="entry name" value="AAA"/>
    <property type="match status" value="1"/>
</dbReference>
<dbReference type="SUPFAM" id="SSF52540">
    <property type="entry name" value="P-loop containing nucleoside triphosphate hydrolases"/>
    <property type="match status" value="1"/>
</dbReference>
<dbReference type="SUPFAM" id="SSF48019">
    <property type="entry name" value="post-AAA+ oligomerization domain-like"/>
    <property type="match status" value="1"/>
</dbReference>
<comment type="function">
    <text evidence="1 3 4 5 9">Component of ATP-dependent clamp loader (RFC and RFC-like) complexes for DNA clamps, such as the POL30/PCNA homotrimer and the checkpoint clamp DDC1:MEC3:RAD17 complex. During a clamp loading circle, the RFC:clamp complex binds to DNA and the recognition of the double-stranded/single-stranded junction stimulates ATP hydrolysis by RFC. The complex presumably provides bipartite ATP sites in which one subunit supplies a catalytic site for hydrolysis of ATP bound to the neighboring subunit. Dissociation of RFC from the clamp leaves the clamp encircling DNA. Component of the replication factor C (RFC or activator 1) complex which loads POL30/PCNA and acts during elongation of primed DNA templates by DNA polymerase delta and epsilon. RFC has an essential but redundant activity in sister chromatid cohesion establishment. Component of the RFC-like complex CTF18-RFC which is required for efficient establishment of chromosome cohesion during S-phase and may load or unload POL30/PCNA. Component of the RFC-like RAD24-RFC complex which loads the checkpoint clamp DDC1:MEC3:RAD17 complex and is involved in DNA repair pathways. Component of the RFC-like ELG1-RFC complex which appears to have a role in DNA replication, replication fork re-start, recombination and repair.</text>
</comment>
<comment type="subunit">
    <text evidence="1 2 3 4 5 6 8 9 10">Replication factor C (RFC) is a heteropentamer of subunits RFC1, RFC2, RFC3, RFC4 and RFC5 and forms a complex with POL30/PCNA in the presence of ATP. Component of the RAD24-RFC complex which consists of RAD24, RFC2, RFC3, RFC4 and RFC5 and associates with the checkpoint clamp DDC1:MEC3:RAD17 complex. Component of the ELG1-RFC complex which consists of ELG1, RFC2, RFC3, RFC4 and RFC5. Component of the CTF18-RFC complex, which consists of CTF18, CTF8, DCC1, RFC2, RFC3, RFC4 and RFC5. RFC5 interacts with ECO1.</text>
</comment>
<comment type="interaction">
    <interactant intactId="EBI-15016">
        <id>P38251</id>
    </interactant>
    <interactant intactId="EBI-4560">
        <id>P49956</id>
        <label>CTF18</label>
    </interactant>
    <organismsDiffer>false</organismsDiffer>
    <experiments>5</experiments>
</comment>
<comment type="interaction">
    <interactant intactId="EBI-15016">
        <id>P38251</id>
    </interactant>
    <interactant intactId="EBI-5216">
        <id>P38877</id>
        <label>CTF8</label>
    </interactant>
    <organismsDiffer>false</organismsDiffer>
    <experiments>3</experiments>
</comment>
<comment type="interaction">
    <interactant intactId="EBI-15016">
        <id>P38251</id>
    </interactant>
    <interactant intactId="EBI-32195">
        <id>Q12050</id>
        <label>ELG1</label>
    </interactant>
    <organismsDiffer>false</organismsDiffer>
    <experiments>5</experiments>
</comment>
<comment type="interaction">
    <interactant intactId="EBI-15016">
        <id>P38251</id>
    </interactant>
    <interactant intactId="EBI-14675">
        <id>P32641</id>
        <label>RAD24</label>
    </interactant>
    <organismsDiffer>false</organismsDiffer>
    <experiments>5</experiments>
</comment>
<comment type="interaction">
    <interactant intactId="EBI-15016">
        <id>P38251</id>
    </interactant>
    <interactant intactId="EBI-14992">
        <id>P40348</id>
        <label>RFC2</label>
    </interactant>
    <organismsDiffer>false</organismsDiffer>
    <experiments>3</experiments>
</comment>
<comment type="subcellular location">
    <subcellularLocation>
        <location evidence="11">Nucleus</location>
    </subcellularLocation>
</comment>
<comment type="miscellaneous">
    <text evidence="7">Present with 5040 molecules/cell in log phase SD medium.</text>
</comment>
<comment type="similarity">
    <text evidence="11">Belongs to the activator 1 small subunits family.</text>
</comment>
<gene>
    <name type="primary">RFC5</name>
    <name type="ordered locus">YBR087W</name>
    <name type="ORF">YBR0810</name>
</gene>
<keyword id="KW-0002">3D-structure</keyword>
<keyword id="KW-0067">ATP-binding</keyword>
<keyword id="KW-0131">Cell cycle</keyword>
<keyword id="KW-0235">DNA replication</keyword>
<keyword id="KW-0238">DNA-binding</keyword>
<keyword id="KW-0547">Nucleotide-binding</keyword>
<keyword id="KW-0539">Nucleus</keyword>
<keyword id="KW-1185">Reference proteome</keyword>
<accession>P38251</accession>
<accession>D6VQ88</accession>